<evidence type="ECO:0000255" key="1">
    <source>
        <dbReference type="HAMAP-Rule" id="MF_00918"/>
    </source>
</evidence>
<keyword id="KW-0963">Cytoplasm</keyword>
<keyword id="KW-0238">DNA-binding</keyword>
<keyword id="KW-1185">Reference proteome</keyword>
<keyword id="KW-0804">Transcription</keyword>
<keyword id="KW-0805">Transcription regulation</keyword>
<proteinExistence type="evidence at protein level"/>
<name>YEEN_ECOLI</name>
<organism>
    <name type="scientific">Escherichia coli (strain K12)</name>
    <dbReference type="NCBI Taxonomy" id="83333"/>
    <lineage>
        <taxon>Bacteria</taxon>
        <taxon>Pseudomonadati</taxon>
        <taxon>Pseudomonadota</taxon>
        <taxon>Gammaproteobacteria</taxon>
        <taxon>Enterobacterales</taxon>
        <taxon>Enterobacteriaceae</taxon>
        <taxon>Escherichia</taxon>
    </lineage>
</organism>
<reference key="1">
    <citation type="journal article" date="1996" name="DNA Res.">
        <title>A 460-kb DNA sequence of the Escherichia coli K-12 genome corresponding to the 40.1-50.0 min region on the linkage map.</title>
        <authorList>
            <person name="Itoh T."/>
            <person name="Aiba H."/>
            <person name="Baba T."/>
            <person name="Fujita K."/>
            <person name="Hayashi K."/>
            <person name="Inada T."/>
            <person name="Isono K."/>
            <person name="Kasai H."/>
            <person name="Kimura S."/>
            <person name="Kitakawa M."/>
            <person name="Kitagawa M."/>
            <person name="Makino K."/>
            <person name="Miki T."/>
            <person name="Mizobuchi K."/>
            <person name="Mori H."/>
            <person name="Mori T."/>
            <person name="Motomura K."/>
            <person name="Nakade S."/>
            <person name="Nakamura Y."/>
            <person name="Nashimoto H."/>
            <person name="Nishio Y."/>
            <person name="Oshima T."/>
            <person name="Saito N."/>
            <person name="Sampei G."/>
            <person name="Seki Y."/>
            <person name="Sivasundaram S."/>
            <person name="Tagami H."/>
            <person name="Takeda J."/>
            <person name="Takemoto K."/>
            <person name="Wada C."/>
            <person name="Yamamoto Y."/>
            <person name="Horiuchi T."/>
        </authorList>
    </citation>
    <scope>NUCLEOTIDE SEQUENCE [LARGE SCALE GENOMIC DNA]</scope>
    <source>
        <strain>K12 / W3110 / ATCC 27325 / DSM 5911</strain>
    </source>
</reference>
<reference key="2">
    <citation type="journal article" date="1997" name="Science">
        <title>The complete genome sequence of Escherichia coli K-12.</title>
        <authorList>
            <person name="Blattner F.R."/>
            <person name="Plunkett G. III"/>
            <person name="Bloch C.A."/>
            <person name="Perna N.T."/>
            <person name="Burland V."/>
            <person name="Riley M."/>
            <person name="Collado-Vides J."/>
            <person name="Glasner J.D."/>
            <person name="Rode C.K."/>
            <person name="Mayhew G.F."/>
            <person name="Gregor J."/>
            <person name="Davis N.W."/>
            <person name="Kirkpatrick H.A."/>
            <person name="Goeden M.A."/>
            <person name="Rose D.J."/>
            <person name="Mau B."/>
            <person name="Shao Y."/>
        </authorList>
    </citation>
    <scope>NUCLEOTIDE SEQUENCE [LARGE SCALE GENOMIC DNA]</scope>
    <source>
        <strain>K12 / MG1655 / ATCC 47076</strain>
    </source>
</reference>
<reference key="3">
    <citation type="journal article" date="2006" name="Mol. Syst. Biol.">
        <title>Highly accurate genome sequences of Escherichia coli K-12 strains MG1655 and W3110.</title>
        <authorList>
            <person name="Hayashi K."/>
            <person name="Morooka N."/>
            <person name="Yamamoto Y."/>
            <person name="Fujita K."/>
            <person name="Isono K."/>
            <person name="Choi S."/>
            <person name="Ohtsubo E."/>
            <person name="Baba T."/>
            <person name="Wanner B.L."/>
            <person name="Mori H."/>
            <person name="Horiuchi T."/>
        </authorList>
    </citation>
    <scope>NUCLEOTIDE SEQUENCE [LARGE SCALE GENOMIC DNA]</scope>
    <source>
        <strain>K12 / W3110 / ATCC 27325 / DSM 5911</strain>
    </source>
</reference>
<gene>
    <name evidence="1" type="primary">yeeN</name>
    <name type="ordered locus">b1983</name>
    <name type="ordered locus">JW1964</name>
</gene>
<feature type="chain" id="PRO_0000175803" description="Probable transcriptional regulatory protein YeeN">
    <location>
        <begin position="1"/>
        <end position="238"/>
    </location>
</feature>
<protein>
    <recommendedName>
        <fullName evidence="1">Probable transcriptional regulatory protein YeeN</fullName>
    </recommendedName>
</protein>
<comment type="interaction">
    <interactant intactId="EBI-545240">
        <id>P0A8A2</id>
    </interactant>
    <interactant intactId="EBI-545264">
        <id>P76069</id>
        <label>ydaY</label>
    </interactant>
    <organismsDiffer>false</organismsDiffer>
    <experiments>2</experiments>
</comment>
<comment type="subcellular location">
    <subcellularLocation>
        <location evidence="1">Cytoplasm</location>
    </subcellularLocation>
</comment>
<comment type="similarity">
    <text evidence="1">Belongs to the TACO1 family. YeeN subfamily.</text>
</comment>
<accession>P0A8A2</accession>
<accession>P76351</accession>
<accession>P94751</accession>
<sequence length="238" mass="25867">MGRKWANIVAKKTAKDGATSKIYAKFGVEIYAAAKQGEPDPELNTSLKFVIERAKQAQVPKHVIDKAIDKAKGGGDETFVQGRYEGFGPNGSMIIAETLTSNVNRTIANVRTIFNKKGGNIGAAGSVSYMFDNTGVIVFKGTDPDHIFEILLEAEVDVRDVTEEEGNIVIYTEPTDLHKGIAALKAAGITEFSTTELEMIAQSEVELSPEDLEIFEGLVDALEDDDDVQKVYHNVANL</sequence>
<dbReference type="EMBL" id="U00096">
    <property type="protein sequence ID" value="AAC75047.1"/>
    <property type="molecule type" value="Genomic_DNA"/>
</dbReference>
<dbReference type="EMBL" id="AP009048">
    <property type="protein sequence ID" value="BAA15803.2"/>
    <property type="molecule type" value="Genomic_DNA"/>
</dbReference>
<dbReference type="PIR" id="A64963">
    <property type="entry name" value="A64963"/>
</dbReference>
<dbReference type="RefSeq" id="NP_416490.1">
    <property type="nucleotide sequence ID" value="NC_000913.3"/>
</dbReference>
<dbReference type="RefSeq" id="WP_000532923.1">
    <property type="nucleotide sequence ID" value="NZ_SSZK01000051.1"/>
</dbReference>
<dbReference type="SMR" id="P0A8A2"/>
<dbReference type="BioGRID" id="4259159">
    <property type="interactions" value="86"/>
</dbReference>
<dbReference type="DIP" id="DIP-36184N"/>
<dbReference type="FunCoup" id="P0A8A2">
    <property type="interactions" value="615"/>
</dbReference>
<dbReference type="IntAct" id="P0A8A2">
    <property type="interactions" value="22"/>
</dbReference>
<dbReference type="STRING" id="511145.b1983"/>
<dbReference type="jPOST" id="P0A8A2"/>
<dbReference type="PaxDb" id="511145-b1983"/>
<dbReference type="EnsemblBacteria" id="AAC75047">
    <property type="protein sequence ID" value="AAC75047"/>
    <property type="gene ID" value="b1983"/>
</dbReference>
<dbReference type="GeneID" id="946493"/>
<dbReference type="KEGG" id="ecj:JW1964"/>
<dbReference type="KEGG" id="eco:b1983"/>
<dbReference type="KEGG" id="ecoc:C3026_11195"/>
<dbReference type="PATRIC" id="fig|511145.12.peg.2061"/>
<dbReference type="EchoBASE" id="EB3163"/>
<dbReference type="eggNOG" id="COG0217">
    <property type="taxonomic scope" value="Bacteria"/>
</dbReference>
<dbReference type="HOGENOM" id="CLU_062974_2_0_6"/>
<dbReference type="InParanoid" id="P0A8A2"/>
<dbReference type="OMA" id="FGPGGCM"/>
<dbReference type="OrthoDB" id="9781053at2"/>
<dbReference type="PhylomeDB" id="P0A8A2"/>
<dbReference type="BioCyc" id="EcoCyc:G7068-MONOMER"/>
<dbReference type="PRO" id="PR:P0A8A2"/>
<dbReference type="Proteomes" id="UP000000625">
    <property type="component" value="Chromosome"/>
</dbReference>
<dbReference type="GO" id="GO:0005829">
    <property type="term" value="C:cytosol"/>
    <property type="evidence" value="ECO:0000314"/>
    <property type="project" value="EcoCyc"/>
</dbReference>
<dbReference type="GO" id="GO:0003677">
    <property type="term" value="F:DNA binding"/>
    <property type="evidence" value="ECO:0007669"/>
    <property type="project" value="UniProtKB-UniRule"/>
</dbReference>
<dbReference type="GO" id="GO:0006355">
    <property type="term" value="P:regulation of DNA-templated transcription"/>
    <property type="evidence" value="ECO:0007669"/>
    <property type="project" value="UniProtKB-UniRule"/>
</dbReference>
<dbReference type="FunFam" id="1.10.10.200:FF:000003">
    <property type="entry name" value="Probable transcriptional regulatory protein YeeN"/>
    <property type="match status" value="1"/>
</dbReference>
<dbReference type="FunFam" id="3.30.70.980:FF:000004">
    <property type="entry name" value="Probable transcriptional regulatory protein YeeN"/>
    <property type="match status" value="1"/>
</dbReference>
<dbReference type="Gene3D" id="1.10.10.200">
    <property type="match status" value="1"/>
</dbReference>
<dbReference type="Gene3D" id="3.30.70.980">
    <property type="match status" value="2"/>
</dbReference>
<dbReference type="HAMAP" id="MF_00693">
    <property type="entry name" value="Transcrip_reg_TACO1"/>
    <property type="match status" value="1"/>
</dbReference>
<dbReference type="HAMAP" id="MF_00918">
    <property type="entry name" value="Transcrip_reg_TACO1_YeeN"/>
    <property type="match status" value="1"/>
</dbReference>
<dbReference type="InterPro" id="IPR017856">
    <property type="entry name" value="Integrase-like_N"/>
</dbReference>
<dbReference type="InterPro" id="IPR048300">
    <property type="entry name" value="TACO1_YebC-like_2nd/3rd_dom"/>
</dbReference>
<dbReference type="InterPro" id="IPR049083">
    <property type="entry name" value="TACO1_YebC_N"/>
</dbReference>
<dbReference type="InterPro" id="IPR002876">
    <property type="entry name" value="Transcrip_reg_TACO1-like"/>
</dbReference>
<dbReference type="InterPro" id="IPR026564">
    <property type="entry name" value="Transcrip_reg_TACO1-like_dom3"/>
</dbReference>
<dbReference type="InterPro" id="IPR026562">
    <property type="entry name" value="Transcrip_reg_TACO1_YeeN"/>
</dbReference>
<dbReference type="InterPro" id="IPR029072">
    <property type="entry name" value="YebC-like"/>
</dbReference>
<dbReference type="NCBIfam" id="NF009044">
    <property type="entry name" value="PRK12378.1"/>
    <property type="match status" value="1"/>
</dbReference>
<dbReference type="NCBIfam" id="TIGR01033">
    <property type="entry name" value="YebC/PmpR family DNA-binding transcriptional regulator"/>
    <property type="match status" value="1"/>
</dbReference>
<dbReference type="PANTHER" id="PTHR12532">
    <property type="entry name" value="TRANSLATIONAL ACTIVATOR OF CYTOCHROME C OXIDASE 1"/>
    <property type="match status" value="1"/>
</dbReference>
<dbReference type="PANTHER" id="PTHR12532:SF0">
    <property type="entry name" value="TRANSLATIONAL ACTIVATOR OF CYTOCHROME C OXIDASE 1"/>
    <property type="match status" value="1"/>
</dbReference>
<dbReference type="Pfam" id="PF20772">
    <property type="entry name" value="TACO1_YebC_N"/>
    <property type="match status" value="1"/>
</dbReference>
<dbReference type="Pfam" id="PF01709">
    <property type="entry name" value="Transcrip_reg"/>
    <property type="match status" value="1"/>
</dbReference>
<dbReference type="SUPFAM" id="SSF75625">
    <property type="entry name" value="YebC-like"/>
    <property type="match status" value="1"/>
</dbReference>